<comment type="function">
    <text evidence="1">One of the primary rRNA binding proteins, it binds specifically to the 5'-end of 16S ribosomal RNA.</text>
</comment>
<comment type="subunit">
    <text evidence="1">Part of the 30S ribosomal subunit.</text>
</comment>
<comment type="similarity">
    <text evidence="1">Belongs to the universal ribosomal protein uS17 family.</text>
</comment>
<dbReference type="EMBL" id="CP000628">
    <property type="protein sequence ID" value="ACM26288.1"/>
    <property type="molecule type" value="Genomic_DNA"/>
</dbReference>
<dbReference type="RefSeq" id="WP_007690764.1">
    <property type="nucleotide sequence ID" value="NC_011985.1"/>
</dbReference>
<dbReference type="SMR" id="B9JDT7"/>
<dbReference type="STRING" id="311403.Arad_1983"/>
<dbReference type="GeneID" id="86848176"/>
<dbReference type="KEGG" id="ara:Arad_1983"/>
<dbReference type="eggNOG" id="COG0186">
    <property type="taxonomic scope" value="Bacteria"/>
</dbReference>
<dbReference type="HOGENOM" id="CLU_073626_1_1_5"/>
<dbReference type="Proteomes" id="UP000001600">
    <property type="component" value="Chromosome 1"/>
</dbReference>
<dbReference type="GO" id="GO:0022627">
    <property type="term" value="C:cytosolic small ribosomal subunit"/>
    <property type="evidence" value="ECO:0007669"/>
    <property type="project" value="TreeGrafter"/>
</dbReference>
<dbReference type="GO" id="GO:0019843">
    <property type="term" value="F:rRNA binding"/>
    <property type="evidence" value="ECO:0007669"/>
    <property type="project" value="UniProtKB-UniRule"/>
</dbReference>
<dbReference type="GO" id="GO:0003735">
    <property type="term" value="F:structural constituent of ribosome"/>
    <property type="evidence" value="ECO:0007669"/>
    <property type="project" value="InterPro"/>
</dbReference>
<dbReference type="GO" id="GO:0006412">
    <property type="term" value="P:translation"/>
    <property type="evidence" value="ECO:0007669"/>
    <property type="project" value="UniProtKB-UniRule"/>
</dbReference>
<dbReference type="CDD" id="cd00364">
    <property type="entry name" value="Ribosomal_uS17"/>
    <property type="match status" value="1"/>
</dbReference>
<dbReference type="Gene3D" id="2.40.50.140">
    <property type="entry name" value="Nucleic acid-binding proteins"/>
    <property type="match status" value="1"/>
</dbReference>
<dbReference type="HAMAP" id="MF_01345_B">
    <property type="entry name" value="Ribosomal_uS17_B"/>
    <property type="match status" value="1"/>
</dbReference>
<dbReference type="InterPro" id="IPR012340">
    <property type="entry name" value="NA-bd_OB-fold"/>
</dbReference>
<dbReference type="InterPro" id="IPR000266">
    <property type="entry name" value="Ribosomal_uS17"/>
</dbReference>
<dbReference type="InterPro" id="IPR019984">
    <property type="entry name" value="Ribosomal_uS17_bact/chlr"/>
</dbReference>
<dbReference type="NCBIfam" id="NF004123">
    <property type="entry name" value="PRK05610.1"/>
    <property type="match status" value="1"/>
</dbReference>
<dbReference type="NCBIfam" id="TIGR03635">
    <property type="entry name" value="uS17_bact"/>
    <property type="match status" value="1"/>
</dbReference>
<dbReference type="PANTHER" id="PTHR10744">
    <property type="entry name" value="40S RIBOSOMAL PROTEIN S11 FAMILY MEMBER"/>
    <property type="match status" value="1"/>
</dbReference>
<dbReference type="PANTHER" id="PTHR10744:SF1">
    <property type="entry name" value="SMALL RIBOSOMAL SUBUNIT PROTEIN US17M"/>
    <property type="match status" value="1"/>
</dbReference>
<dbReference type="Pfam" id="PF00366">
    <property type="entry name" value="Ribosomal_S17"/>
    <property type="match status" value="1"/>
</dbReference>
<dbReference type="PRINTS" id="PR00973">
    <property type="entry name" value="RIBOSOMALS17"/>
</dbReference>
<dbReference type="SUPFAM" id="SSF50249">
    <property type="entry name" value="Nucleic acid-binding proteins"/>
    <property type="match status" value="1"/>
</dbReference>
<feature type="chain" id="PRO_1000166453" description="Small ribosomal subunit protein uS17">
    <location>
        <begin position="1"/>
        <end position="79"/>
    </location>
</feature>
<evidence type="ECO:0000255" key="1">
    <source>
        <dbReference type="HAMAP-Rule" id="MF_01345"/>
    </source>
</evidence>
<evidence type="ECO:0000305" key="2"/>
<gene>
    <name evidence="1" type="primary">rpsQ</name>
    <name type="ordered locus">Arad_1983</name>
</gene>
<name>RS17_RHIR8</name>
<accession>B9JDT7</accession>
<reference key="1">
    <citation type="journal article" date="2009" name="J. Bacteriol.">
        <title>Genome sequences of three Agrobacterium biovars help elucidate the evolution of multichromosome genomes in bacteria.</title>
        <authorList>
            <person name="Slater S.C."/>
            <person name="Goldman B.S."/>
            <person name="Goodner B."/>
            <person name="Setubal J.C."/>
            <person name="Farrand S.K."/>
            <person name="Nester E.W."/>
            <person name="Burr T.J."/>
            <person name="Banta L."/>
            <person name="Dickerman A.W."/>
            <person name="Paulsen I."/>
            <person name="Otten L."/>
            <person name="Suen G."/>
            <person name="Welch R."/>
            <person name="Almeida N.F."/>
            <person name="Arnold F."/>
            <person name="Burton O.T."/>
            <person name="Du Z."/>
            <person name="Ewing A."/>
            <person name="Godsy E."/>
            <person name="Heisel S."/>
            <person name="Houmiel K.L."/>
            <person name="Jhaveri J."/>
            <person name="Lu J."/>
            <person name="Miller N.M."/>
            <person name="Norton S."/>
            <person name="Chen Q."/>
            <person name="Phoolcharoen W."/>
            <person name="Ohlin V."/>
            <person name="Ondrusek D."/>
            <person name="Pride N."/>
            <person name="Stricklin S.L."/>
            <person name="Sun J."/>
            <person name="Wheeler C."/>
            <person name="Wilson L."/>
            <person name="Zhu H."/>
            <person name="Wood D.W."/>
        </authorList>
    </citation>
    <scope>NUCLEOTIDE SEQUENCE [LARGE SCALE GENOMIC DNA]</scope>
    <source>
        <strain>K84 / ATCC BAA-868</strain>
    </source>
</reference>
<sequence length="79" mass="9080">MPKRILQGVVVSDKNEKTVVVRVERRFAHPLLQKTVRRSKKYKAHDENNQYKVGDTVSIEECAPISKDKTWTVVSAQSK</sequence>
<protein>
    <recommendedName>
        <fullName evidence="1">Small ribosomal subunit protein uS17</fullName>
    </recommendedName>
    <alternativeName>
        <fullName evidence="2">30S ribosomal protein S17</fullName>
    </alternativeName>
</protein>
<organism>
    <name type="scientific">Rhizobium rhizogenes (strain K84 / ATCC BAA-868)</name>
    <name type="common">Agrobacterium radiobacter</name>
    <dbReference type="NCBI Taxonomy" id="311403"/>
    <lineage>
        <taxon>Bacteria</taxon>
        <taxon>Pseudomonadati</taxon>
        <taxon>Pseudomonadota</taxon>
        <taxon>Alphaproteobacteria</taxon>
        <taxon>Hyphomicrobiales</taxon>
        <taxon>Rhizobiaceae</taxon>
        <taxon>Rhizobium/Agrobacterium group</taxon>
        <taxon>Rhizobium</taxon>
    </lineage>
</organism>
<proteinExistence type="inferred from homology"/>
<keyword id="KW-0687">Ribonucleoprotein</keyword>
<keyword id="KW-0689">Ribosomal protein</keyword>
<keyword id="KW-0694">RNA-binding</keyword>
<keyword id="KW-0699">rRNA-binding</keyword>